<reference key="1">
    <citation type="journal article" date="2004" name="Genome Res.">
        <title>The status, quality, and expansion of the NIH full-length cDNA project: the Mammalian Gene Collection (MGC).</title>
        <authorList>
            <consortium name="The MGC Project Team"/>
        </authorList>
    </citation>
    <scope>NUCLEOTIDE SEQUENCE [LARGE SCALE MRNA]</scope>
    <source>
        <tissue>Testis</tissue>
    </source>
</reference>
<proteinExistence type="evidence at transcript level"/>
<feature type="chain" id="PRO_0000261397" description="Fatty acyl-CoA reductase 1">
    <location>
        <begin position="1"/>
        <end position="515"/>
    </location>
</feature>
<feature type="topological domain" description="Cytoplasmic" evidence="1">
    <location>
        <begin position="1"/>
        <end position="465"/>
    </location>
</feature>
<feature type="transmembrane region" description="Helical" evidence="3">
    <location>
        <begin position="466"/>
        <end position="483"/>
    </location>
</feature>
<feature type="topological domain" description="Peroxisomal" evidence="1">
    <location>
        <begin position="484"/>
        <end position="515"/>
    </location>
</feature>
<feature type="region of interest" description="Necessary and sufficient for PEX19-mediated localization into peroxisome membrane" evidence="1">
    <location>
        <begin position="451"/>
        <end position="507"/>
    </location>
</feature>
<organism>
    <name type="scientific">Rattus norvegicus</name>
    <name type="common">Rat</name>
    <dbReference type="NCBI Taxonomy" id="10116"/>
    <lineage>
        <taxon>Eukaryota</taxon>
        <taxon>Metazoa</taxon>
        <taxon>Chordata</taxon>
        <taxon>Craniata</taxon>
        <taxon>Vertebrata</taxon>
        <taxon>Euteleostomi</taxon>
        <taxon>Mammalia</taxon>
        <taxon>Eutheria</taxon>
        <taxon>Euarchontoglires</taxon>
        <taxon>Glires</taxon>
        <taxon>Rodentia</taxon>
        <taxon>Myomorpha</taxon>
        <taxon>Muroidea</taxon>
        <taxon>Muridae</taxon>
        <taxon>Murinae</taxon>
        <taxon>Rattus</taxon>
    </lineage>
</organism>
<accession>Q66H50</accession>
<comment type="function">
    <text evidence="2">Catalyzes the reduction of saturated and unsaturated C16 or C18 fatty acyl-CoA to fatty alcohols. It plays an essential role in the production of ether lipids/plasmalogens which synthesis requires fatty alcohols. In parallel, it is also required for wax monoesters production since fatty alcohols also constitute a substrate for their synthesis.</text>
</comment>
<comment type="function">
    <text evidence="1 2">Catalyzes the reduction of saturated and unsaturated C16 or C18 fatty acyl-CoA to fatty alcohols (By similarity). It plays an essential role in the production of ether lipids/plasmalogens which synthesis requires fatty alcohols (By similarity). In parallel, it is also required for wax monoesters production since fatty alcohols also constitute a substrate for their synthesis (By similarity).</text>
</comment>
<comment type="catalytic activity">
    <reaction evidence="1">
        <text>a long-chain fatty acyl-CoA + 2 NADPH + 2 H(+) = a long-chain primary fatty alcohol + 2 NADP(+) + CoA</text>
        <dbReference type="Rhea" id="RHEA:52716"/>
        <dbReference type="ChEBI" id="CHEBI:15378"/>
        <dbReference type="ChEBI" id="CHEBI:57287"/>
        <dbReference type="ChEBI" id="CHEBI:57783"/>
        <dbReference type="ChEBI" id="CHEBI:58349"/>
        <dbReference type="ChEBI" id="CHEBI:77396"/>
        <dbReference type="ChEBI" id="CHEBI:83139"/>
        <dbReference type="EC" id="1.2.1.84"/>
    </reaction>
    <physiologicalReaction direction="left-to-right" evidence="1">
        <dbReference type="Rhea" id="RHEA:52717"/>
    </physiologicalReaction>
</comment>
<comment type="catalytic activity">
    <reaction evidence="1">
        <text>hexadecanoyl-CoA + 2 NADPH + 2 H(+) = hexadecan-1-ol + 2 NADP(+) + CoA</text>
        <dbReference type="Rhea" id="RHEA:36315"/>
        <dbReference type="ChEBI" id="CHEBI:15378"/>
        <dbReference type="ChEBI" id="CHEBI:16125"/>
        <dbReference type="ChEBI" id="CHEBI:57287"/>
        <dbReference type="ChEBI" id="CHEBI:57379"/>
        <dbReference type="ChEBI" id="CHEBI:57783"/>
        <dbReference type="ChEBI" id="CHEBI:58349"/>
        <dbReference type="EC" id="1.2.1.84"/>
    </reaction>
    <physiologicalReaction direction="left-to-right" evidence="1">
        <dbReference type="Rhea" id="RHEA:36316"/>
    </physiologicalReaction>
</comment>
<comment type="catalytic activity">
    <reaction evidence="2">
        <text>octadecanoyl-CoA + 2 NADPH + 2 H(+) = octadecan-1-ol + 2 NADP(+) + CoA</text>
        <dbReference type="Rhea" id="RHEA:36319"/>
        <dbReference type="ChEBI" id="CHEBI:15378"/>
        <dbReference type="ChEBI" id="CHEBI:32154"/>
        <dbReference type="ChEBI" id="CHEBI:57287"/>
        <dbReference type="ChEBI" id="CHEBI:57394"/>
        <dbReference type="ChEBI" id="CHEBI:57783"/>
        <dbReference type="ChEBI" id="CHEBI:58349"/>
        <dbReference type="EC" id="1.2.1.84"/>
    </reaction>
    <physiologicalReaction direction="left-to-right" evidence="2">
        <dbReference type="Rhea" id="RHEA:36320"/>
    </physiologicalReaction>
</comment>
<comment type="catalytic activity">
    <reaction evidence="2">
        <text>(9Z)-octadecenoyl-CoA + 2 NADPH + 2 H(+) = (9Z)-octadecen-1-ol + 2 NADP(+) + CoA</text>
        <dbReference type="Rhea" id="RHEA:36323"/>
        <dbReference type="ChEBI" id="CHEBI:15378"/>
        <dbReference type="ChEBI" id="CHEBI:57287"/>
        <dbReference type="ChEBI" id="CHEBI:57387"/>
        <dbReference type="ChEBI" id="CHEBI:57783"/>
        <dbReference type="ChEBI" id="CHEBI:58349"/>
        <dbReference type="ChEBI" id="CHEBI:73504"/>
    </reaction>
    <physiologicalReaction direction="left-to-right" evidence="2">
        <dbReference type="Rhea" id="RHEA:36324"/>
    </physiologicalReaction>
</comment>
<comment type="catalytic activity">
    <reaction evidence="2">
        <text>(9Z,12Z)-octadecadienoyl-CoA + 2 NADPH + 2 H(+) = (9Z,12Z)-octadecadien-1-ol + 2 NADP(+) + CoA</text>
        <dbReference type="Rhea" id="RHEA:36363"/>
        <dbReference type="ChEBI" id="CHEBI:15378"/>
        <dbReference type="ChEBI" id="CHEBI:57287"/>
        <dbReference type="ChEBI" id="CHEBI:57383"/>
        <dbReference type="ChEBI" id="CHEBI:57783"/>
        <dbReference type="ChEBI" id="CHEBI:58349"/>
        <dbReference type="ChEBI" id="CHEBI:73534"/>
    </reaction>
    <physiologicalReaction direction="left-to-right" evidence="2">
        <dbReference type="Rhea" id="RHEA:36364"/>
    </physiologicalReaction>
</comment>
<comment type="catalytic activity">
    <reaction evidence="1">
        <text>eicosanoyl-CoA + 2 NADPH + 2 H(+) = eicosan-1-ol + 2 NADP(+) + CoA</text>
        <dbReference type="Rhea" id="RHEA:81727"/>
        <dbReference type="ChEBI" id="CHEBI:15378"/>
        <dbReference type="ChEBI" id="CHEBI:57287"/>
        <dbReference type="ChEBI" id="CHEBI:57380"/>
        <dbReference type="ChEBI" id="CHEBI:57783"/>
        <dbReference type="ChEBI" id="CHEBI:58349"/>
        <dbReference type="ChEBI" id="CHEBI:75627"/>
    </reaction>
    <physiologicalReaction direction="left-to-right" evidence="1">
        <dbReference type="Rhea" id="RHEA:81728"/>
    </physiologicalReaction>
</comment>
<comment type="catalytic activity">
    <reaction evidence="1">
        <text>16-methylheptadecanoyl-CoA + 2 NADPH + 2 H(+) = 16-methylheptadecan-1-ol + 2 NADP(+) + CoA</text>
        <dbReference type="Rhea" id="RHEA:81763"/>
        <dbReference type="ChEBI" id="CHEBI:15378"/>
        <dbReference type="ChEBI" id="CHEBI:57287"/>
        <dbReference type="ChEBI" id="CHEBI:57783"/>
        <dbReference type="ChEBI" id="CHEBI:58349"/>
        <dbReference type="ChEBI" id="CHEBI:84911"/>
        <dbReference type="ChEBI" id="CHEBI:231998"/>
    </reaction>
    <physiologicalReaction direction="left-to-right" evidence="1">
        <dbReference type="Rhea" id="RHEA:81764"/>
    </physiologicalReaction>
</comment>
<comment type="catalytic activity">
    <reaction evidence="1">
        <text>18-methylnonadecanoyl-CoA + 2 NADPH + 2 H(+) = 18-methylnonadecan-1-ol + 2 NADP(+) + CoA</text>
        <dbReference type="Rhea" id="RHEA:81767"/>
        <dbReference type="ChEBI" id="CHEBI:15378"/>
        <dbReference type="ChEBI" id="CHEBI:57287"/>
        <dbReference type="ChEBI" id="CHEBI:57783"/>
        <dbReference type="ChEBI" id="CHEBI:58349"/>
        <dbReference type="ChEBI" id="CHEBI:84914"/>
        <dbReference type="ChEBI" id="CHEBI:231999"/>
    </reaction>
    <physiologicalReaction direction="left-to-right" evidence="1">
        <dbReference type="Rhea" id="RHEA:81768"/>
    </physiologicalReaction>
</comment>
<comment type="subunit">
    <text evidence="1">Interacts with PEX19; PEX19 mediates the targeting of FAR1 to peroxisomes.</text>
</comment>
<comment type="subcellular location">
    <subcellularLocation>
        <location evidence="1">Peroxisome membrane</location>
        <topology evidence="1">Single-pass membrane protein</topology>
    </subcellularLocation>
</comment>
<comment type="similarity">
    <text evidence="4">Belongs to the fatty acyl-CoA reductase family.</text>
</comment>
<sequence length="515" mass="59268">MVSIPEYYEGKNILLTGATGFLGKVLLEKLLRSCPKVNSVYVLVRQKAGQTPQERVEEILSGKLFDRLRDENPDFRQKIIAINSELTQPKLALSEEDKEIIIDSTNVIFHCAATVRFNENLRDAVQLNVIATRQLILLAQQMKNLEVFMHVSTAYAYCNRKHIDEVVYPPPVDPKKLIDSLEWMDDGLVNDITPKLIGDRPNTYIYTKALAEYVVQQEGAKLNVAIVRPSIVGASWKEPFPGWIDNFNGPSGLFIAAGKGILRTMRASNNALADLVPVDVVVNTSLAAAWYSGVNRPRNIMVYNCTTGSTNPFHWGEVGDYLNHSFKTNPLNQVFRHPYVKFYSNNLMLHYWKGVKHTVPALLLDLALRLTGQKPWMMKTITRLHKAMVFLEYFTSNSWVWNTDNVNMLMNQLNPEDKKTFNIDVRQLHWAEYIENYCMGTKKYVLNEEMSGLPAARKHLNKLRNIRYGFNTILVILIWRIFIARSQMARNIWYFVVSLCYKFLSYFRASSTMRY</sequence>
<gene>
    <name evidence="5" type="primary">Far1</name>
</gene>
<keyword id="KW-0444">Lipid biosynthesis</keyword>
<keyword id="KW-0443">Lipid metabolism</keyword>
<keyword id="KW-0472">Membrane</keyword>
<keyword id="KW-0521">NADP</keyword>
<keyword id="KW-0560">Oxidoreductase</keyword>
<keyword id="KW-0576">Peroxisome</keyword>
<keyword id="KW-1185">Reference proteome</keyword>
<keyword id="KW-0812">Transmembrane</keyword>
<keyword id="KW-1133">Transmembrane helix</keyword>
<evidence type="ECO:0000250" key="1">
    <source>
        <dbReference type="UniProtKB" id="Q8WVX9"/>
    </source>
</evidence>
<evidence type="ECO:0000250" key="2">
    <source>
        <dbReference type="UniProtKB" id="Q922J9"/>
    </source>
</evidence>
<evidence type="ECO:0000255" key="3"/>
<evidence type="ECO:0000305" key="4"/>
<evidence type="ECO:0000312" key="5">
    <source>
        <dbReference type="RGD" id="1306647"/>
    </source>
</evidence>
<protein>
    <recommendedName>
        <fullName evidence="1">Fatty acyl-CoA reductase 1</fullName>
        <shortName>Far1</shortName>
        <ecNumber evidence="1">1.2.1.84</ecNumber>
    </recommendedName>
</protein>
<dbReference type="EC" id="1.2.1.84" evidence="1"/>
<dbReference type="EMBL" id="BC082015">
    <property type="protein sequence ID" value="AAH82015.1"/>
    <property type="molecule type" value="mRNA"/>
</dbReference>
<dbReference type="RefSeq" id="NP_001011933.1">
    <property type="nucleotide sequence ID" value="NM_001011933.1"/>
</dbReference>
<dbReference type="RefSeq" id="XP_006230082.1">
    <property type="nucleotide sequence ID" value="XM_006230020.5"/>
</dbReference>
<dbReference type="SMR" id="Q66H50"/>
<dbReference type="FunCoup" id="Q66H50">
    <property type="interactions" value="2391"/>
</dbReference>
<dbReference type="STRING" id="10116.ENSRNOP00000018532"/>
<dbReference type="PhosphoSitePlus" id="Q66H50"/>
<dbReference type="PaxDb" id="10116-ENSRNOP00000068284"/>
<dbReference type="Ensembl" id="ENSRNOT00000076756.2">
    <property type="protein sequence ID" value="ENSRNOP00000068069.1"/>
    <property type="gene ID" value="ENSRNOG00000013176.9"/>
</dbReference>
<dbReference type="GeneID" id="293173"/>
<dbReference type="KEGG" id="rno:293173"/>
<dbReference type="UCSC" id="RGD:1306647">
    <property type="organism name" value="rat"/>
</dbReference>
<dbReference type="AGR" id="RGD:1306647"/>
<dbReference type="CTD" id="84188"/>
<dbReference type="RGD" id="1306647">
    <property type="gene designation" value="Far1"/>
</dbReference>
<dbReference type="eggNOG" id="KOG1221">
    <property type="taxonomic scope" value="Eukaryota"/>
</dbReference>
<dbReference type="GeneTree" id="ENSGT00390000006367"/>
<dbReference type="HOGENOM" id="CLU_024661_0_0_1"/>
<dbReference type="InParanoid" id="Q66H50"/>
<dbReference type="OMA" id="NLMLHYW"/>
<dbReference type="OrthoDB" id="429813at2759"/>
<dbReference type="Reactome" id="R-RNO-9640463">
    <property type="pathway name" value="Wax biosynthesis"/>
</dbReference>
<dbReference type="PRO" id="PR:Q66H50"/>
<dbReference type="Proteomes" id="UP000002494">
    <property type="component" value="Chromosome 1"/>
</dbReference>
<dbReference type="Bgee" id="ENSRNOG00000013176">
    <property type="expression patterns" value="Expressed in stomach and 18 other cell types or tissues"/>
</dbReference>
<dbReference type="ExpressionAtlas" id="Q66H50">
    <property type="expression patterns" value="baseline and differential"/>
</dbReference>
<dbReference type="GO" id="GO:0005778">
    <property type="term" value="C:peroxisomal membrane"/>
    <property type="evidence" value="ECO:0000250"/>
    <property type="project" value="UniProtKB"/>
</dbReference>
<dbReference type="GO" id="GO:0005777">
    <property type="term" value="C:peroxisome"/>
    <property type="evidence" value="ECO:0000266"/>
    <property type="project" value="RGD"/>
</dbReference>
<dbReference type="GO" id="GO:0102965">
    <property type="term" value="F:alcohol-forming long-chain fatty acyl-CoA reductase activity"/>
    <property type="evidence" value="ECO:0000250"/>
    <property type="project" value="UniProtKB"/>
</dbReference>
<dbReference type="GO" id="GO:0080019">
    <property type="term" value="F:alcohol-forming very long-chain fatty acyl-CoA reductase activity"/>
    <property type="evidence" value="ECO:0000266"/>
    <property type="project" value="RGD"/>
</dbReference>
<dbReference type="GO" id="GO:0008611">
    <property type="term" value="P:ether lipid biosynthetic process"/>
    <property type="evidence" value="ECO:0000250"/>
    <property type="project" value="UniProtKB"/>
</dbReference>
<dbReference type="GO" id="GO:0046474">
    <property type="term" value="P:glycerophospholipid biosynthetic process"/>
    <property type="evidence" value="ECO:0000266"/>
    <property type="project" value="RGD"/>
</dbReference>
<dbReference type="GO" id="GO:0035336">
    <property type="term" value="P:long-chain fatty-acyl-CoA metabolic process"/>
    <property type="evidence" value="ECO:0000266"/>
    <property type="project" value="RGD"/>
</dbReference>
<dbReference type="GO" id="GO:0010025">
    <property type="term" value="P:wax biosynthetic process"/>
    <property type="evidence" value="ECO:0000250"/>
    <property type="project" value="UniProtKB"/>
</dbReference>
<dbReference type="CDD" id="cd05236">
    <property type="entry name" value="FAR-N_SDR_e"/>
    <property type="match status" value="1"/>
</dbReference>
<dbReference type="CDD" id="cd09071">
    <property type="entry name" value="FAR_C"/>
    <property type="match status" value="1"/>
</dbReference>
<dbReference type="FunFam" id="3.40.50.720:FF:000123">
    <property type="entry name" value="Fatty acyl-CoA reductase"/>
    <property type="match status" value="1"/>
</dbReference>
<dbReference type="Gene3D" id="3.40.50.720">
    <property type="entry name" value="NAD(P)-binding Rossmann-like Domain"/>
    <property type="match status" value="1"/>
</dbReference>
<dbReference type="InterPro" id="IPR026055">
    <property type="entry name" value="FAR"/>
</dbReference>
<dbReference type="InterPro" id="IPR033640">
    <property type="entry name" value="FAR_C"/>
</dbReference>
<dbReference type="InterPro" id="IPR013120">
    <property type="entry name" value="Far_NAD-bd"/>
</dbReference>
<dbReference type="InterPro" id="IPR036291">
    <property type="entry name" value="NAD(P)-bd_dom_sf"/>
</dbReference>
<dbReference type="PANTHER" id="PTHR11011:SF119">
    <property type="entry name" value="FATTY ACYL-COA REDUCTASE 1"/>
    <property type="match status" value="1"/>
</dbReference>
<dbReference type="PANTHER" id="PTHR11011">
    <property type="entry name" value="MALE STERILITY PROTEIN 2-RELATED"/>
    <property type="match status" value="1"/>
</dbReference>
<dbReference type="Pfam" id="PF07993">
    <property type="entry name" value="NAD_binding_4"/>
    <property type="match status" value="1"/>
</dbReference>
<dbReference type="Pfam" id="PF03015">
    <property type="entry name" value="Sterile"/>
    <property type="match status" value="1"/>
</dbReference>
<dbReference type="SUPFAM" id="SSF51735">
    <property type="entry name" value="NAD(P)-binding Rossmann-fold domains"/>
    <property type="match status" value="1"/>
</dbReference>
<name>FACR1_RAT</name>